<sequence length="212" mass="24657">MNIFRFLGDISHLSAIIILLLKIWKSRSCAGISGKSQLLFAIVFTTRYLDLFTNFISFYNTSMKVVYVASSYATVWMIYSKFKATYDGNHDTFRVEFLIVPTAILSFLVNHDFTPLEILWTFSIYLESVAILPQLFMVSKTGEAETITSHYLFALGIYRTLYLFNWIWRYQFEEFFDLIAIVAGLVQTVLYCDFFYLYITKVLKGKKLSLPA</sequence>
<feature type="chain" id="PRO_0000252345" description="ER lumen protein-retaining receptor 1-B">
    <location>
        <begin position="1"/>
        <end position="212"/>
    </location>
</feature>
<feature type="topological domain" description="Lumenal" evidence="5">
    <location>
        <begin position="1"/>
        <end position="4"/>
    </location>
</feature>
<feature type="transmembrane region" description="Helical" evidence="4">
    <location>
        <begin position="5"/>
        <end position="24"/>
    </location>
</feature>
<feature type="topological domain" description="Cytoplasmic" evidence="5">
    <location>
        <begin position="25"/>
        <end position="32"/>
    </location>
</feature>
<feature type="transmembrane region" description="Helical" evidence="4">
    <location>
        <begin position="33"/>
        <end position="52"/>
    </location>
</feature>
<feature type="topological domain" description="Lumenal" evidence="5">
    <location>
        <begin position="53"/>
        <end position="58"/>
    </location>
</feature>
<feature type="transmembrane region" description="Helical" evidence="4">
    <location>
        <begin position="59"/>
        <end position="79"/>
    </location>
</feature>
<feature type="topological domain" description="Cytoplasmic" evidence="5">
    <location>
        <begin position="80"/>
        <end position="92"/>
    </location>
</feature>
<feature type="transmembrane region" description="Helical" evidence="4">
    <location>
        <begin position="93"/>
        <end position="110"/>
    </location>
</feature>
<feature type="topological domain" description="Lumenal" evidence="5">
    <location>
        <begin position="111"/>
        <end position="116"/>
    </location>
</feature>
<feature type="transmembrane region" description="Helical" evidence="4">
    <location>
        <begin position="117"/>
        <end position="135"/>
    </location>
</feature>
<feature type="topological domain" description="Cytoplasmic" evidence="5">
    <location>
        <begin position="136"/>
        <end position="149"/>
    </location>
</feature>
<feature type="transmembrane region" description="Helical" evidence="4">
    <location>
        <begin position="150"/>
        <end position="168"/>
    </location>
</feature>
<feature type="topological domain" description="Lumenal" evidence="5">
    <location>
        <begin position="169"/>
        <end position="178"/>
    </location>
</feature>
<feature type="transmembrane region" description="Helical" evidence="4">
    <location>
        <begin position="179"/>
        <end position="199"/>
    </location>
</feature>
<feature type="topological domain" description="Cytoplasmic" evidence="5">
    <location>
        <begin position="200"/>
        <end position="212"/>
    </location>
</feature>
<feature type="region of interest" description="Interaction with the K-D-E-L motif on target proteins" evidence="4">
    <location>
        <begin position="47"/>
        <end position="48"/>
    </location>
</feature>
<feature type="region of interest" description="Interaction with the K-D-E-L motif on target proteins" evidence="4">
    <location>
        <begin position="159"/>
        <end position="169"/>
    </location>
</feature>
<feature type="region of interest" description="Important for recycling of cargo proteins with the sequence motif K-D-E-L from the Golgi to the endoplasmic reticulum" evidence="3">
    <location>
        <begin position="204"/>
        <end position="207"/>
    </location>
</feature>
<feature type="site" description="Interaction with the K-D-E-L motif on target proteins" evidence="4">
    <location>
        <position position="5"/>
    </location>
</feature>
<feature type="site" description="Interaction with the K-D-E-L motif on target proteins" evidence="4">
    <location>
        <position position="117"/>
    </location>
</feature>
<feature type="site" description="Important for recycling of cargo proteins with the sequence motif K-D-E-L from the Golgi to the endoplasmic reticulum" evidence="1">
    <location>
        <position position="193"/>
    </location>
</feature>
<dbReference type="EMBL" id="BC080126">
    <property type="protein sequence ID" value="AAH80126.1"/>
    <property type="molecule type" value="mRNA"/>
</dbReference>
<dbReference type="SMR" id="Q68ES4"/>
<dbReference type="DNASU" id="447400"/>
<dbReference type="GeneID" id="447400"/>
<dbReference type="KEGG" id="xla:447400"/>
<dbReference type="AGR" id="Xenbase:XB-GENE-6253883"/>
<dbReference type="CTD" id="447400"/>
<dbReference type="Xenbase" id="XB-GENE-6253883">
    <property type="gene designation" value="kdelr1.L"/>
</dbReference>
<dbReference type="OMA" id="HYSHWIT"/>
<dbReference type="OrthoDB" id="7694678at2759"/>
<dbReference type="Proteomes" id="UP000186698">
    <property type="component" value="Chromosome 7L"/>
</dbReference>
<dbReference type="Bgee" id="447400">
    <property type="expression patterns" value="Expressed in lung and 19 other cell types or tissues"/>
</dbReference>
<dbReference type="GO" id="GO:0005801">
    <property type="term" value="C:cis-Golgi network"/>
    <property type="evidence" value="ECO:0000318"/>
    <property type="project" value="GO_Central"/>
</dbReference>
<dbReference type="GO" id="GO:0030663">
    <property type="term" value="C:COPI-coated vesicle membrane"/>
    <property type="evidence" value="ECO:0007669"/>
    <property type="project" value="UniProtKB-SubCell"/>
</dbReference>
<dbReference type="GO" id="GO:0005783">
    <property type="term" value="C:endoplasmic reticulum"/>
    <property type="evidence" value="ECO:0000318"/>
    <property type="project" value="GO_Central"/>
</dbReference>
<dbReference type="GO" id="GO:0005789">
    <property type="term" value="C:endoplasmic reticulum membrane"/>
    <property type="evidence" value="ECO:0007669"/>
    <property type="project" value="UniProtKB-SubCell"/>
</dbReference>
<dbReference type="GO" id="GO:0033116">
    <property type="term" value="C:endoplasmic reticulum-Golgi intermediate compartment membrane"/>
    <property type="evidence" value="ECO:0007669"/>
    <property type="project" value="UniProtKB-SubCell"/>
</dbReference>
<dbReference type="GO" id="GO:0000139">
    <property type="term" value="C:Golgi membrane"/>
    <property type="evidence" value="ECO:0000250"/>
    <property type="project" value="UniProtKB"/>
</dbReference>
<dbReference type="GO" id="GO:0046923">
    <property type="term" value="F:ER retention sequence binding"/>
    <property type="evidence" value="ECO:0000318"/>
    <property type="project" value="GO_Central"/>
</dbReference>
<dbReference type="GO" id="GO:0005046">
    <property type="term" value="F:KDEL sequence binding"/>
    <property type="evidence" value="ECO:0000250"/>
    <property type="project" value="UniProtKB"/>
</dbReference>
<dbReference type="GO" id="GO:0006621">
    <property type="term" value="P:protein retention in ER lumen"/>
    <property type="evidence" value="ECO:0000318"/>
    <property type="project" value="GO_Central"/>
</dbReference>
<dbReference type="GO" id="GO:0015031">
    <property type="term" value="P:protein transport"/>
    <property type="evidence" value="ECO:0007669"/>
    <property type="project" value="UniProtKB-KW"/>
</dbReference>
<dbReference type="GO" id="GO:0006890">
    <property type="term" value="P:retrograde vesicle-mediated transport, Golgi to endoplasmic reticulum"/>
    <property type="evidence" value="ECO:0000250"/>
    <property type="project" value="UniProtKB"/>
</dbReference>
<dbReference type="InterPro" id="IPR000133">
    <property type="entry name" value="ER_ret_rcpt"/>
</dbReference>
<dbReference type="PANTHER" id="PTHR10585">
    <property type="entry name" value="ER LUMEN PROTEIN RETAINING RECEPTOR"/>
    <property type="match status" value="1"/>
</dbReference>
<dbReference type="Pfam" id="PF00810">
    <property type="entry name" value="ER_lumen_recept"/>
    <property type="match status" value="1"/>
</dbReference>
<dbReference type="PRINTS" id="PR00660">
    <property type="entry name" value="ERLUMENR"/>
</dbReference>
<dbReference type="PROSITE" id="PS00951">
    <property type="entry name" value="ER_LUMEN_RECEPTOR_1"/>
    <property type="match status" value="1"/>
</dbReference>
<dbReference type="PROSITE" id="PS00952">
    <property type="entry name" value="ER_LUMEN_RECEPTOR_2"/>
    <property type="match status" value="1"/>
</dbReference>
<protein>
    <recommendedName>
        <fullName>ER lumen protein-retaining receptor 1-B</fullName>
    </recommendedName>
    <alternativeName>
        <fullName>KDEL endoplasmic reticulum protein retention receptor 1-B</fullName>
        <shortName>KDEL receptor 1-B</shortName>
    </alternativeName>
</protein>
<organism>
    <name type="scientific">Xenopus laevis</name>
    <name type="common">African clawed frog</name>
    <dbReference type="NCBI Taxonomy" id="8355"/>
    <lineage>
        <taxon>Eukaryota</taxon>
        <taxon>Metazoa</taxon>
        <taxon>Chordata</taxon>
        <taxon>Craniata</taxon>
        <taxon>Vertebrata</taxon>
        <taxon>Euteleostomi</taxon>
        <taxon>Amphibia</taxon>
        <taxon>Batrachia</taxon>
        <taxon>Anura</taxon>
        <taxon>Pipoidea</taxon>
        <taxon>Pipidae</taxon>
        <taxon>Xenopodinae</taxon>
        <taxon>Xenopus</taxon>
        <taxon>Xenopus</taxon>
    </lineage>
</organism>
<comment type="function">
    <text evidence="1">Receptor for the C-terminal sequence motif K-D-E-L that is present on endoplasmic reticulum resident proteins and that mediates their recycling from the Golgi back to the endoplasmic reticulum.</text>
</comment>
<comment type="subcellular location">
    <subcellularLocation>
        <location evidence="2">Golgi apparatus membrane</location>
        <topology evidence="2">Multi-pass membrane protein</topology>
    </subcellularLocation>
    <subcellularLocation>
        <location evidence="2">Cytoplasmic vesicle</location>
        <location evidence="2">COPI-coated vesicle membrane</location>
        <topology evidence="2">Multi-pass membrane protein</topology>
    </subcellularLocation>
    <subcellularLocation>
        <location evidence="2">Endoplasmic reticulum membrane</location>
        <topology evidence="2">Multi-pass membrane protein</topology>
    </subcellularLocation>
    <subcellularLocation>
        <location evidence="2">Endoplasmic reticulum-Golgi intermediate compartment membrane</location>
        <topology evidence="2">Multi-pass membrane protein</topology>
    </subcellularLocation>
    <text evidence="2">Localized in the Golgi in the absence of bound proteins with the sequence motif K-D-E-L. Trafficks back to the endoplasmic reticulum together with cargo proteins containing the sequence motif K-D-E-L.</text>
</comment>
<comment type="similarity">
    <text evidence="5">Belongs to the ERD2 family.</text>
</comment>
<proteinExistence type="evidence at transcript level"/>
<evidence type="ECO:0000250" key="1">
    <source>
        <dbReference type="UniProtKB" id="P24390"/>
    </source>
</evidence>
<evidence type="ECO:0000250" key="2">
    <source>
        <dbReference type="UniProtKB" id="P33946"/>
    </source>
</evidence>
<evidence type="ECO:0000250" key="3">
    <source>
        <dbReference type="UniProtKB" id="P33947"/>
    </source>
</evidence>
<evidence type="ECO:0000250" key="4">
    <source>
        <dbReference type="UniProtKB" id="Q5ZKX9"/>
    </source>
</evidence>
<evidence type="ECO:0000305" key="5"/>
<name>ER21B_XENLA</name>
<keyword id="KW-0968">Cytoplasmic vesicle</keyword>
<keyword id="KW-0256">Endoplasmic reticulum</keyword>
<keyword id="KW-0931">ER-Golgi transport</keyword>
<keyword id="KW-0333">Golgi apparatus</keyword>
<keyword id="KW-0472">Membrane</keyword>
<keyword id="KW-0653">Protein transport</keyword>
<keyword id="KW-0675">Receptor</keyword>
<keyword id="KW-1185">Reference proteome</keyword>
<keyword id="KW-0812">Transmembrane</keyword>
<keyword id="KW-1133">Transmembrane helix</keyword>
<keyword id="KW-0813">Transport</keyword>
<reference key="1">
    <citation type="submission" date="2004-08" db="EMBL/GenBank/DDBJ databases">
        <authorList>
            <consortium name="NIH - Xenopus Gene Collection (XGC) project"/>
        </authorList>
    </citation>
    <scope>NUCLEOTIDE SEQUENCE [LARGE SCALE MRNA]</scope>
    <source>
        <tissue>Brain</tissue>
    </source>
</reference>
<accession>Q68ES4</accession>
<gene>
    <name type="primary">kdelr1-b</name>
</gene>